<reference key="1">
    <citation type="journal article" date="2007" name="Nat. Genet.">
        <title>Genomic analysis of Bartonella identifies type IV secretion systems as host adaptability factors.</title>
        <authorList>
            <person name="Saenz H.L."/>
            <person name="Engel P."/>
            <person name="Stoeckli M.C."/>
            <person name="Lanz C."/>
            <person name="Raddatz G."/>
            <person name="Vayssier-Taussat M."/>
            <person name="Birtles R."/>
            <person name="Schuster S.C."/>
            <person name="Dehio C."/>
        </authorList>
    </citation>
    <scope>NUCLEOTIDE SEQUENCE [LARGE SCALE GENOMIC DNA]</scope>
    <source>
        <strain>CIP 105476 / IBS 506</strain>
    </source>
</reference>
<evidence type="ECO:0000255" key="1">
    <source>
        <dbReference type="HAMAP-Rule" id="MF_00249"/>
    </source>
</evidence>
<dbReference type="EMBL" id="AM260525">
    <property type="protein sequence ID" value="CAK00708.1"/>
    <property type="molecule type" value="Genomic_DNA"/>
</dbReference>
<dbReference type="RefSeq" id="WP_012230626.1">
    <property type="nucleotide sequence ID" value="NC_010161.1"/>
</dbReference>
<dbReference type="SMR" id="A9IMR3"/>
<dbReference type="KEGG" id="btr:BT_0230"/>
<dbReference type="eggNOG" id="COG1220">
    <property type="taxonomic scope" value="Bacteria"/>
</dbReference>
<dbReference type="HOGENOM" id="CLU_033123_0_0_5"/>
<dbReference type="Proteomes" id="UP000001592">
    <property type="component" value="Chromosome"/>
</dbReference>
<dbReference type="GO" id="GO:0009376">
    <property type="term" value="C:HslUV protease complex"/>
    <property type="evidence" value="ECO:0007669"/>
    <property type="project" value="UniProtKB-UniRule"/>
</dbReference>
<dbReference type="GO" id="GO:0005524">
    <property type="term" value="F:ATP binding"/>
    <property type="evidence" value="ECO:0007669"/>
    <property type="project" value="UniProtKB-UniRule"/>
</dbReference>
<dbReference type="GO" id="GO:0016887">
    <property type="term" value="F:ATP hydrolysis activity"/>
    <property type="evidence" value="ECO:0007669"/>
    <property type="project" value="InterPro"/>
</dbReference>
<dbReference type="GO" id="GO:0008233">
    <property type="term" value="F:peptidase activity"/>
    <property type="evidence" value="ECO:0007669"/>
    <property type="project" value="InterPro"/>
</dbReference>
<dbReference type="GO" id="GO:0036402">
    <property type="term" value="F:proteasome-activating activity"/>
    <property type="evidence" value="ECO:0007669"/>
    <property type="project" value="UniProtKB-UniRule"/>
</dbReference>
<dbReference type="GO" id="GO:0043335">
    <property type="term" value="P:protein unfolding"/>
    <property type="evidence" value="ECO:0007669"/>
    <property type="project" value="UniProtKB-UniRule"/>
</dbReference>
<dbReference type="GO" id="GO:0051603">
    <property type="term" value="P:proteolysis involved in protein catabolic process"/>
    <property type="evidence" value="ECO:0007669"/>
    <property type="project" value="TreeGrafter"/>
</dbReference>
<dbReference type="CDD" id="cd19498">
    <property type="entry name" value="RecA-like_HslU"/>
    <property type="match status" value="1"/>
</dbReference>
<dbReference type="FunFam" id="3.40.50.300:FF:000213">
    <property type="entry name" value="ATP-dependent protease ATPase subunit HslU"/>
    <property type="match status" value="1"/>
</dbReference>
<dbReference type="FunFam" id="3.40.50.300:FF:000220">
    <property type="entry name" value="ATP-dependent protease ATPase subunit HslU"/>
    <property type="match status" value="1"/>
</dbReference>
<dbReference type="Gene3D" id="1.10.8.60">
    <property type="match status" value="1"/>
</dbReference>
<dbReference type="Gene3D" id="1.10.8.10">
    <property type="entry name" value="DNA helicase RuvA subunit, C-terminal domain"/>
    <property type="match status" value="1"/>
</dbReference>
<dbReference type="Gene3D" id="3.40.50.300">
    <property type="entry name" value="P-loop containing nucleotide triphosphate hydrolases"/>
    <property type="match status" value="2"/>
</dbReference>
<dbReference type="HAMAP" id="MF_00249">
    <property type="entry name" value="HslU"/>
    <property type="match status" value="1"/>
</dbReference>
<dbReference type="InterPro" id="IPR003593">
    <property type="entry name" value="AAA+_ATPase"/>
</dbReference>
<dbReference type="InterPro" id="IPR050052">
    <property type="entry name" value="ATP-dep_Clp_protease_ClpX"/>
</dbReference>
<dbReference type="InterPro" id="IPR003959">
    <property type="entry name" value="ATPase_AAA_core"/>
</dbReference>
<dbReference type="InterPro" id="IPR019489">
    <property type="entry name" value="Clp_ATPase_C"/>
</dbReference>
<dbReference type="InterPro" id="IPR004491">
    <property type="entry name" value="HslU"/>
</dbReference>
<dbReference type="InterPro" id="IPR027417">
    <property type="entry name" value="P-loop_NTPase"/>
</dbReference>
<dbReference type="NCBIfam" id="TIGR00390">
    <property type="entry name" value="hslU"/>
    <property type="match status" value="1"/>
</dbReference>
<dbReference type="NCBIfam" id="NF003544">
    <property type="entry name" value="PRK05201.1"/>
    <property type="match status" value="1"/>
</dbReference>
<dbReference type="PANTHER" id="PTHR48102">
    <property type="entry name" value="ATP-DEPENDENT CLP PROTEASE ATP-BINDING SUBUNIT CLPX-LIKE, MITOCHONDRIAL-RELATED"/>
    <property type="match status" value="1"/>
</dbReference>
<dbReference type="PANTHER" id="PTHR48102:SF3">
    <property type="entry name" value="ATP-DEPENDENT PROTEASE ATPASE SUBUNIT HSLU"/>
    <property type="match status" value="1"/>
</dbReference>
<dbReference type="Pfam" id="PF00004">
    <property type="entry name" value="AAA"/>
    <property type="match status" value="1"/>
</dbReference>
<dbReference type="Pfam" id="PF07724">
    <property type="entry name" value="AAA_2"/>
    <property type="match status" value="1"/>
</dbReference>
<dbReference type="Pfam" id="PF10431">
    <property type="entry name" value="ClpB_D2-small"/>
    <property type="match status" value="1"/>
</dbReference>
<dbReference type="SMART" id="SM00382">
    <property type="entry name" value="AAA"/>
    <property type="match status" value="1"/>
</dbReference>
<dbReference type="SMART" id="SM01086">
    <property type="entry name" value="ClpB_D2-small"/>
    <property type="match status" value="1"/>
</dbReference>
<dbReference type="SUPFAM" id="SSF52540">
    <property type="entry name" value="P-loop containing nucleoside triphosphate hydrolases"/>
    <property type="match status" value="1"/>
</dbReference>
<gene>
    <name evidence="1" type="primary">hslU</name>
    <name type="ordered locus">BT_0230</name>
</gene>
<protein>
    <recommendedName>
        <fullName evidence="1">ATP-dependent protease ATPase subunit HslU</fullName>
    </recommendedName>
    <alternativeName>
        <fullName evidence="1">Unfoldase HslU</fullName>
    </alternativeName>
</protein>
<sequence length="436" mass="48480">MCIVFSPRETVSELDRFIIGQNDAKRSVAIALRNRWRRQQLDEPMREEVMPKNILMIGPTGVGKTGIARRLAKLSGAPFVKVEATKFTEVGYVGRDVEQIIRDLVEIAVSLVREKKRDEIKEKAHMNAEERVLDALVGKTASPATRDSFRKKLREGELDEKEIEIEVADNNSNSASTFDIPGMPGAQMGIMNLSDILGKMGNRTKVRKTTVRDAFKPLIDDESEKLLDQEQIIQEALRVAENDGIVFIDEIDKIATKDGGASAAVSREGVQRDLLPLVEGTTIATKYGQIKTDHILFIASGAFHVSKPSDLLPELQGRLPIRVELNPLTREDLRRILTEPEASLIKQYIALMATEEVHLEITDDAIDALADIAVDLNARIENIGARRLQTVMERVLDEISFTAPDKAGTSFKIDAAYVRKSIGELAADIDLSRFIL</sequence>
<name>HSLU_BART1</name>
<organism>
    <name type="scientific">Bartonella tribocorum (strain CIP 105476 / IBS 506)</name>
    <dbReference type="NCBI Taxonomy" id="382640"/>
    <lineage>
        <taxon>Bacteria</taxon>
        <taxon>Pseudomonadati</taxon>
        <taxon>Pseudomonadota</taxon>
        <taxon>Alphaproteobacteria</taxon>
        <taxon>Hyphomicrobiales</taxon>
        <taxon>Bartonellaceae</taxon>
        <taxon>Bartonella</taxon>
    </lineage>
</organism>
<accession>A9IMR3</accession>
<proteinExistence type="inferred from homology"/>
<comment type="function">
    <text evidence="1">ATPase subunit of a proteasome-like degradation complex; this subunit has chaperone activity. The binding of ATP and its subsequent hydrolysis by HslU are essential for unfolding of protein substrates subsequently hydrolyzed by HslV. HslU recognizes the N-terminal part of its protein substrates and unfolds these before they are guided to HslV for hydrolysis.</text>
</comment>
<comment type="subunit">
    <text evidence="1">A double ring-shaped homohexamer of HslV is capped on each side by a ring-shaped HslU homohexamer. The assembly of the HslU/HslV complex is dependent on binding of ATP.</text>
</comment>
<comment type="subcellular location">
    <subcellularLocation>
        <location evidence="1">Cytoplasm</location>
    </subcellularLocation>
</comment>
<comment type="similarity">
    <text evidence="1">Belongs to the ClpX chaperone family. HslU subfamily.</text>
</comment>
<keyword id="KW-0067">ATP-binding</keyword>
<keyword id="KW-0143">Chaperone</keyword>
<keyword id="KW-0963">Cytoplasm</keyword>
<keyword id="KW-0547">Nucleotide-binding</keyword>
<keyword id="KW-0346">Stress response</keyword>
<feature type="chain" id="PRO_1000078439" description="ATP-dependent protease ATPase subunit HslU">
    <location>
        <begin position="1"/>
        <end position="436"/>
    </location>
</feature>
<feature type="binding site" evidence="1">
    <location>
        <position position="19"/>
    </location>
    <ligand>
        <name>ATP</name>
        <dbReference type="ChEBI" id="CHEBI:30616"/>
    </ligand>
</feature>
<feature type="binding site" evidence="1">
    <location>
        <begin position="61"/>
        <end position="65"/>
    </location>
    <ligand>
        <name>ATP</name>
        <dbReference type="ChEBI" id="CHEBI:30616"/>
    </ligand>
</feature>
<feature type="binding site" evidence="1">
    <location>
        <position position="249"/>
    </location>
    <ligand>
        <name>ATP</name>
        <dbReference type="ChEBI" id="CHEBI:30616"/>
    </ligand>
</feature>
<feature type="binding site" evidence="1">
    <location>
        <position position="314"/>
    </location>
    <ligand>
        <name>ATP</name>
        <dbReference type="ChEBI" id="CHEBI:30616"/>
    </ligand>
</feature>
<feature type="binding site" evidence="1">
    <location>
        <position position="386"/>
    </location>
    <ligand>
        <name>ATP</name>
        <dbReference type="ChEBI" id="CHEBI:30616"/>
    </ligand>
</feature>